<protein>
    <recommendedName>
        <fullName>Carboxyl-terminal-processing protease</fullName>
        <ecNumber>3.4.21.102</ecNumber>
    </recommendedName>
    <alternativeName>
        <fullName>CtpA</fullName>
    </alternativeName>
</protein>
<reference key="1">
    <citation type="journal article" date="1994" name="J. Biol. Chem.">
        <title>Molecular cloning and characterization of the ctpA gene encoding a carboxyl-terminal processing protease. Analysis of a spontaneous photosystem II-deficient mutant strain of the cyanobacterium Synechocystis sp. PCC 6803.</title>
        <authorList>
            <person name="Shestakov S.V."/>
            <person name="Anbudurai P.R."/>
            <person name="Stanbekova G.E."/>
            <person name="Gadzhiev A."/>
            <person name="Lind L.K."/>
            <person name="Pakrasi H.B."/>
        </authorList>
    </citation>
    <scope>NUCLEOTIDE SEQUENCE [GENOMIC DNA]</scope>
    <scope>FUNCTION</scope>
    <scope>SUBCELLULAR LOCATION</scope>
    <scope>DISRUPTION PHENOTYPE</scope>
    <source>
        <strain>ATCC 27184 / PCC 6803 / N-1</strain>
    </source>
</reference>
<reference key="2">
    <citation type="journal article" date="1994" name="Proc. Natl. Acad. Sci. U.S.A.">
        <title>The ctpA gene encodes the C-terminal processing protease for the D1 protein of the photosystem II reaction center complex.</title>
        <authorList>
            <person name="Anbudurai P.R."/>
            <person name="Mor T.S."/>
            <person name="Ohad I."/>
            <person name="Shestakov S.V."/>
            <person name="Pakrasi H.B."/>
        </authorList>
    </citation>
    <scope>NUCLEOTIDE SEQUENCE [GENOMIC DNA]</scope>
</reference>
<reference key="3">
    <citation type="journal article" date="1995" name="DNA Res.">
        <title>Sequence analysis of the genome of the unicellular cyanobacterium Synechocystis sp. strain PCC6803. I. Sequence features in the 1 Mb region from map positions 64% to 92% of the genome.</title>
        <authorList>
            <person name="Kaneko T."/>
            <person name="Tanaka A."/>
            <person name="Sato S."/>
            <person name="Kotani H."/>
            <person name="Sazuka T."/>
            <person name="Miyajima N."/>
            <person name="Sugiura M."/>
            <person name="Tabata S."/>
        </authorList>
    </citation>
    <scope>NUCLEOTIDE SEQUENCE [LARGE SCALE GENOMIC DNA]</scope>
    <source>
        <strain>ATCC 27184 / PCC 6803 / N-1</strain>
    </source>
</reference>
<reference key="4">
    <citation type="journal article" date="1996" name="DNA Res.">
        <title>Sequence analysis of the genome of the unicellular cyanobacterium Synechocystis sp. strain PCC6803. II. Sequence determination of the entire genome and assignment of potential protein-coding regions.</title>
        <authorList>
            <person name="Kaneko T."/>
            <person name="Sato S."/>
            <person name="Kotani H."/>
            <person name="Tanaka A."/>
            <person name="Asamizu E."/>
            <person name="Nakamura Y."/>
            <person name="Miyajima N."/>
            <person name="Hirosawa M."/>
            <person name="Sugiura M."/>
            <person name="Sasamoto S."/>
            <person name="Kimura T."/>
            <person name="Hosouchi T."/>
            <person name="Matsuno A."/>
            <person name="Muraki A."/>
            <person name="Nakazaki N."/>
            <person name="Naruo K."/>
            <person name="Okumura S."/>
            <person name="Shimpo S."/>
            <person name="Takeuchi C."/>
            <person name="Wada T."/>
            <person name="Watanabe A."/>
            <person name="Yamada M."/>
            <person name="Yasuda M."/>
            <person name="Tabata S."/>
        </authorList>
    </citation>
    <scope>NUCLEOTIDE SEQUENCE [LARGE SCALE GENOMIC DNA]</scope>
    <source>
        <strain>ATCC 27184 / PCC 6803 / Kazusa</strain>
    </source>
</reference>
<name>CTPA_SYNY3</name>
<dbReference type="EC" id="3.4.21.102"/>
<dbReference type="EMBL" id="L25250">
    <property type="protein sequence ID" value="AAA21727.1"/>
    <property type="molecule type" value="Genomic_DNA"/>
</dbReference>
<dbReference type="EMBL" id="BA000022">
    <property type="protein sequence ID" value="BAA10189.1"/>
    <property type="molecule type" value="Genomic_DNA"/>
</dbReference>
<dbReference type="PIR" id="A53964">
    <property type="entry name" value="A53964"/>
</dbReference>
<dbReference type="SMR" id="Q55669"/>
<dbReference type="FunCoup" id="Q55669">
    <property type="interactions" value="409"/>
</dbReference>
<dbReference type="IntAct" id="Q55669">
    <property type="interactions" value="7"/>
</dbReference>
<dbReference type="STRING" id="1148.gene:10499686"/>
<dbReference type="MEROPS" id="S41.008"/>
<dbReference type="PaxDb" id="1148-1001562"/>
<dbReference type="EnsemblBacteria" id="BAA10189">
    <property type="protein sequence ID" value="BAA10189"/>
    <property type="gene ID" value="BAA10189"/>
</dbReference>
<dbReference type="KEGG" id="syn:slr0008"/>
<dbReference type="eggNOG" id="COG0793">
    <property type="taxonomic scope" value="Bacteria"/>
</dbReference>
<dbReference type="InParanoid" id="Q55669"/>
<dbReference type="PhylomeDB" id="Q55669"/>
<dbReference type="BRENDA" id="3.4.21.102">
    <property type="organism ID" value="382"/>
</dbReference>
<dbReference type="Proteomes" id="UP000001425">
    <property type="component" value="Chromosome"/>
</dbReference>
<dbReference type="GO" id="GO:0030288">
    <property type="term" value="C:outer membrane-bounded periplasmic space"/>
    <property type="evidence" value="ECO:0000318"/>
    <property type="project" value="GO_Central"/>
</dbReference>
<dbReference type="GO" id="GO:0031979">
    <property type="term" value="C:plasma membrane-derived thylakoid lumen"/>
    <property type="evidence" value="ECO:0007669"/>
    <property type="project" value="UniProtKB-SubCell"/>
</dbReference>
<dbReference type="GO" id="GO:0004175">
    <property type="term" value="F:endopeptidase activity"/>
    <property type="evidence" value="ECO:0000318"/>
    <property type="project" value="GO_Central"/>
</dbReference>
<dbReference type="GO" id="GO:0004252">
    <property type="term" value="F:serine-type endopeptidase activity"/>
    <property type="evidence" value="ECO:0007669"/>
    <property type="project" value="UniProtKB-EC"/>
</dbReference>
<dbReference type="GO" id="GO:0006508">
    <property type="term" value="P:proteolysis"/>
    <property type="evidence" value="ECO:0007669"/>
    <property type="project" value="UniProtKB-KW"/>
</dbReference>
<dbReference type="GO" id="GO:0007165">
    <property type="term" value="P:signal transduction"/>
    <property type="evidence" value="ECO:0000318"/>
    <property type="project" value="GO_Central"/>
</dbReference>
<dbReference type="CDD" id="cd06782">
    <property type="entry name" value="cpPDZ_CPP-like"/>
    <property type="match status" value="1"/>
</dbReference>
<dbReference type="CDD" id="cd07560">
    <property type="entry name" value="Peptidase_S41_CPP"/>
    <property type="match status" value="1"/>
</dbReference>
<dbReference type="FunFam" id="3.90.226.10:FF:000023">
    <property type="entry name" value="Carboxyl-terminal processing protease"/>
    <property type="match status" value="1"/>
</dbReference>
<dbReference type="FunFam" id="3.30.750.44:FF:000002">
    <property type="entry name" value="carboxyl-terminal-processing peptidase 2, chloroplastic"/>
    <property type="match status" value="1"/>
</dbReference>
<dbReference type="FunFam" id="2.30.42.10:FF:000063">
    <property type="entry name" value="Peptidase, S41 family"/>
    <property type="match status" value="1"/>
</dbReference>
<dbReference type="Gene3D" id="2.30.42.10">
    <property type="match status" value="1"/>
</dbReference>
<dbReference type="Gene3D" id="3.30.750.44">
    <property type="match status" value="1"/>
</dbReference>
<dbReference type="Gene3D" id="3.90.226.10">
    <property type="entry name" value="2-enoyl-CoA Hydratase, Chain A, domain 1"/>
    <property type="match status" value="1"/>
</dbReference>
<dbReference type="InterPro" id="IPR029045">
    <property type="entry name" value="ClpP/crotonase-like_dom_sf"/>
</dbReference>
<dbReference type="InterPro" id="IPR054621">
    <property type="entry name" value="Cterm_S41_CtpA"/>
</dbReference>
<dbReference type="InterPro" id="IPR001478">
    <property type="entry name" value="PDZ"/>
</dbReference>
<dbReference type="InterPro" id="IPR036034">
    <property type="entry name" value="PDZ_sf"/>
</dbReference>
<dbReference type="InterPro" id="IPR004447">
    <property type="entry name" value="Peptidase_S41A"/>
</dbReference>
<dbReference type="InterPro" id="IPR005151">
    <property type="entry name" value="Tail-specific_protease"/>
</dbReference>
<dbReference type="NCBIfam" id="NF045588">
    <property type="entry name" value="Cterm_S41_CtpA"/>
    <property type="match status" value="1"/>
</dbReference>
<dbReference type="NCBIfam" id="TIGR00225">
    <property type="entry name" value="prc"/>
    <property type="match status" value="1"/>
</dbReference>
<dbReference type="PANTHER" id="PTHR32060:SF30">
    <property type="entry name" value="CARBOXY-TERMINAL PROCESSING PROTEASE CTPA"/>
    <property type="match status" value="1"/>
</dbReference>
<dbReference type="PANTHER" id="PTHR32060">
    <property type="entry name" value="TAIL-SPECIFIC PROTEASE"/>
    <property type="match status" value="1"/>
</dbReference>
<dbReference type="Pfam" id="PF00595">
    <property type="entry name" value="PDZ"/>
    <property type="match status" value="1"/>
</dbReference>
<dbReference type="Pfam" id="PF03572">
    <property type="entry name" value="Peptidase_S41"/>
    <property type="match status" value="1"/>
</dbReference>
<dbReference type="SMART" id="SM00228">
    <property type="entry name" value="PDZ"/>
    <property type="match status" value="1"/>
</dbReference>
<dbReference type="SMART" id="SM00245">
    <property type="entry name" value="TSPc"/>
    <property type="match status" value="1"/>
</dbReference>
<dbReference type="SUPFAM" id="SSF52096">
    <property type="entry name" value="ClpP/crotonase"/>
    <property type="match status" value="1"/>
</dbReference>
<dbReference type="SUPFAM" id="SSF50156">
    <property type="entry name" value="PDZ domain-like"/>
    <property type="match status" value="1"/>
</dbReference>
<dbReference type="PROSITE" id="PS50106">
    <property type="entry name" value="PDZ"/>
    <property type="match status" value="1"/>
</dbReference>
<proteinExistence type="inferred from homology"/>
<feature type="signal peptide" evidence="2">
    <location>
        <begin position="1"/>
        <end position="31"/>
    </location>
</feature>
<feature type="chain" id="PRO_0000027335" description="Carboxyl-terminal-processing protease">
    <location>
        <begin position="32"/>
        <end position="427"/>
    </location>
</feature>
<feature type="domain" description="PDZ" evidence="3">
    <location>
        <begin position="104"/>
        <end position="186"/>
    </location>
</feature>
<feature type="active site" description="Charge relay system" evidence="1">
    <location>
        <position position="313"/>
    </location>
</feature>
<feature type="active site" description="Charge relay system" evidence="1">
    <location>
        <position position="324"/>
    </location>
</feature>
<feature type="active site" description="Charge relay system" evidence="1">
    <location>
        <position position="338"/>
    </location>
</feature>
<evidence type="ECO:0000250" key="1"/>
<evidence type="ECO:0000255" key="2"/>
<evidence type="ECO:0000255" key="3">
    <source>
        <dbReference type="PROSITE-ProRule" id="PRU00143"/>
    </source>
</evidence>
<evidence type="ECO:0000269" key="4">
    <source>
    </source>
</evidence>
<evidence type="ECO:0000303" key="5">
    <source>
    </source>
</evidence>
<evidence type="ECO:0000305" key="6"/>
<comment type="function">
    <text evidence="4">Cleavage of the 16 C-terminal residues from the D1 precursor of photosystem II (PSII). This proteolytic processing is necessary to allow the light-driven assembly of the oxygen-evolving cluster (a tetranuclear manganese), which is responsible for photosynthetic water oxidation.</text>
</comment>
<comment type="catalytic activity">
    <reaction>
        <text>The enzyme shows specific recognition of a C-terminal tripeptide, Xaa-Yaa-Zaa, in which Xaa is preferably Ala or Leu, Yaa is preferably Ala or Tyr, and Zaa is preferably Ala, but then cleaves at a variable distance from the C-terminus. A typical cleavage is -Ala-Ala-|-Arg-Ala-Ala-Lys-Glu-Asn-Tyr-Ala-Leu-Ala-Ala.</text>
        <dbReference type="EC" id="3.4.21.102"/>
    </reaction>
</comment>
<comment type="subcellular location">
    <subcellularLocation>
        <location evidence="5">Cellular thylakoid lumen</location>
    </subcellularLocation>
</comment>
<comment type="disruption phenotype">
    <text evidence="4">Complete loss of PSII.</text>
</comment>
<comment type="similarity">
    <text evidence="6">Belongs to the peptidase S41A family.</text>
</comment>
<sequence length="427" mass="46691">MGKRTRRFWALAFSLLMGALIYLGNTPSALAFTEEQKLLLQSWRLVNQSYLDETFNHQNWWLLREKYVKRPLRNREETYTAIEEMLATLDEPFTRLLRPEQYGNLQVTTTGELSGVGLQININPETNQLEIMAPLAGSPAEEAGLQPHDQILAIDGVDTQTLSLDEAAARMRGPKNTKVSLEILSAGTEVPQEFTLTRQLISLSPVAAQLDDSRPGQSVGYIRLSQFSANAYKEVAHALHQLEEQGADGYILDLRNNPGGLLQAGIDIARLWLPESTIVYTVNRQGTQESFTANGEAATDRPLVVLVNQGTASASEILAGALQDNQRATLVGEKTFGKGLIQSLFELSDGAGIAVTVAKYETPQHHDIHKLGIMPDEVVEQPLISFAEITSPADVQYQAALDLLTGGVAIAHKSSSIPAMATAHKPN</sequence>
<gene>
    <name type="primary">ctpA</name>
    <name type="ordered locus">slr0008</name>
</gene>
<accession>Q55669</accession>
<accession>Q55206</accession>
<keyword id="KW-0378">Hydrolase</keyword>
<keyword id="KW-0645">Protease</keyword>
<keyword id="KW-1185">Reference proteome</keyword>
<keyword id="KW-0720">Serine protease</keyword>
<keyword id="KW-0732">Signal</keyword>
<keyword id="KW-0793">Thylakoid</keyword>
<organism>
    <name type="scientific">Synechocystis sp. (strain ATCC 27184 / PCC 6803 / Kazusa)</name>
    <dbReference type="NCBI Taxonomy" id="1111708"/>
    <lineage>
        <taxon>Bacteria</taxon>
        <taxon>Bacillati</taxon>
        <taxon>Cyanobacteriota</taxon>
        <taxon>Cyanophyceae</taxon>
        <taxon>Synechococcales</taxon>
        <taxon>Merismopediaceae</taxon>
        <taxon>Synechocystis</taxon>
    </lineage>
</organism>